<keyword id="KW-1185">Reference proteome</keyword>
<dbReference type="EMBL" id="AF006665">
    <property type="protein sequence ID" value="AAB81139.1"/>
    <property type="molecule type" value="Genomic_DNA"/>
</dbReference>
<dbReference type="EMBL" id="AL009126">
    <property type="protein sequence ID" value="CAB13884.1"/>
    <property type="molecule type" value="Genomic_DNA"/>
</dbReference>
<dbReference type="RefSeq" id="NP_389874.1">
    <property type="nucleotide sequence ID" value="NC_000964.3"/>
</dbReference>
<dbReference type="RefSeq" id="WP_004399249.1">
    <property type="nucleotide sequence ID" value="NZ_OZ025638.1"/>
</dbReference>
<dbReference type="SMR" id="O34702"/>
<dbReference type="FunCoup" id="O34702">
    <property type="interactions" value="24"/>
</dbReference>
<dbReference type="STRING" id="224308.BSU19930"/>
<dbReference type="PaxDb" id="224308-BSU19930"/>
<dbReference type="EnsemblBacteria" id="CAB13884">
    <property type="protein sequence ID" value="CAB13884"/>
    <property type="gene ID" value="BSU_19930"/>
</dbReference>
<dbReference type="GeneID" id="940094"/>
<dbReference type="KEGG" id="bsu:BSU19930"/>
<dbReference type="PATRIC" id="fig|224308.179.peg.2181"/>
<dbReference type="InParanoid" id="O34702"/>
<dbReference type="OrthoDB" id="2888466at2"/>
<dbReference type="BioCyc" id="BSUB:BSU19930-MONOMER"/>
<dbReference type="Proteomes" id="UP000001570">
    <property type="component" value="Chromosome"/>
</dbReference>
<organism>
    <name type="scientific">Bacillus subtilis (strain 168)</name>
    <dbReference type="NCBI Taxonomy" id="224308"/>
    <lineage>
        <taxon>Bacteria</taxon>
        <taxon>Bacillati</taxon>
        <taxon>Bacillota</taxon>
        <taxon>Bacilli</taxon>
        <taxon>Bacillales</taxon>
        <taxon>Bacillaceae</taxon>
        <taxon>Bacillus</taxon>
    </lineage>
</organism>
<sequence length="63" mass="7503">MENEVVFFCRKCNHHLFAKNPMINTLKVISEMDCPNCGEEGYHNWILSHIGDSEKEKENYNWK</sequence>
<accession>O34702</accession>
<accession>Q7BVW5</accession>
<reference key="1">
    <citation type="journal article" date="1998" name="DNA Res.">
        <title>Sequence analysis of the Bacillus subtilis 168 chromosome region between the sspC and odhA loci (184 degrees-180 degrees).</title>
        <authorList>
            <person name="Ghim S.-Y."/>
            <person name="Choi S.-K."/>
            <person name="Shin B.-S."/>
            <person name="Jeong Y.-M."/>
            <person name="Sorokin A."/>
            <person name="Ehrlich S.D."/>
            <person name="Park S.-H."/>
        </authorList>
    </citation>
    <scope>NUCLEOTIDE SEQUENCE [GENOMIC DNA]</scope>
    <source>
        <strain>168</strain>
    </source>
</reference>
<reference key="2">
    <citation type="journal article" date="1997" name="Nature">
        <title>The complete genome sequence of the Gram-positive bacterium Bacillus subtilis.</title>
        <authorList>
            <person name="Kunst F."/>
            <person name="Ogasawara N."/>
            <person name="Moszer I."/>
            <person name="Albertini A.M."/>
            <person name="Alloni G."/>
            <person name="Azevedo V."/>
            <person name="Bertero M.G."/>
            <person name="Bessieres P."/>
            <person name="Bolotin A."/>
            <person name="Borchert S."/>
            <person name="Borriss R."/>
            <person name="Boursier L."/>
            <person name="Brans A."/>
            <person name="Braun M."/>
            <person name="Brignell S.C."/>
            <person name="Bron S."/>
            <person name="Brouillet S."/>
            <person name="Bruschi C.V."/>
            <person name="Caldwell B."/>
            <person name="Capuano V."/>
            <person name="Carter N.M."/>
            <person name="Choi S.-K."/>
            <person name="Codani J.-J."/>
            <person name="Connerton I.F."/>
            <person name="Cummings N.J."/>
            <person name="Daniel R.A."/>
            <person name="Denizot F."/>
            <person name="Devine K.M."/>
            <person name="Duesterhoeft A."/>
            <person name="Ehrlich S.D."/>
            <person name="Emmerson P.T."/>
            <person name="Entian K.-D."/>
            <person name="Errington J."/>
            <person name="Fabret C."/>
            <person name="Ferrari E."/>
            <person name="Foulger D."/>
            <person name="Fritz C."/>
            <person name="Fujita M."/>
            <person name="Fujita Y."/>
            <person name="Fuma S."/>
            <person name="Galizzi A."/>
            <person name="Galleron N."/>
            <person name="Ghim S.-Y."/>
            <person name="Glaser P."/>
            <person name="Goffeau A."/>
            <person name="Golightly E.J."/>
            <person name="Grandi G."/>
            <person name="Guiseppi G."/>
            <person name="Guy B.J."/>
            <person name="Haga K."/>
            <person name="Haiech J."/>
            <person name="Harwood C.R."/>
            <person name="Henaut A."/>
            <person name="Hilbert H."/>
            <person name="Holsappel S."/>
            <person name="Hosono S."/>
            <person name="Hullo M.-F."/>
            <person name="Itaya M."/>
            <person name="Jones L.-M."/>
            <person name="Joris B."/>
            <person name="Karamata D."/>
            <person name="Kasahara Y."/>
            <person name="Klaerr-Blanchard M."/>
            <person name="Klein C."/>
            <person name="Kobayashi Y."/>
            <person name="Koetter P."/>
            <person name="Koningstein G."/>
            <person name="Krogh S."/>
            <person name="Kumano M."/>
            <person name="Kurita K."/>
            <person name="Lapidus A."/>
            <person name="Lardinois S."/>
            <person name="Lauber J."/>
            <person name="Lazarevic V."/>
            <person name="Lee S.-M."/>
            <person name="Levine A."/>
            <person name="Liu H."/>
            <person name="Masuda S."/>
            <person name="Mauel C."/>
            <person name="Medigue C."/>
            <person name="Medina N."/>
            <person name="Mellado R.P."/>
            <person name="Mizuno M."/>
            <person name="Moestl D."/>
            <person name="Nakai S."/>
            <person name="Noback M."/>
            <person name="Noone D."/>
            <person name="O'Reilly M."/>
            <person name="Ogawa K."/>
            <person name="Ogiwara A."/>
            <person name="Oudega B."/>
            <person name="Park S.-H."/>
            <person name="Parro V."/>
            <person name="Pohl T.M."/>
            <person name="Portetelle D."/>
            <person name="Porwollik S."/>
            <person name="Prescott A.M."/>
            <person name="Presecan E."/>
            <person name="Pujic P."/>
            <person name="Purnelle B."/>
            <person name="Rapoport G."/>
            <person name="Rey M."/>
            <person name="Reynolds S."/>
            <person name="Rieger M."/>
            <person name="Rivolta C."/>
            <person name="Rocha E."/>
            <person name="Roche B."/>
            <person name="Rose M."/>
            <person name="Sadaie Y."/>
            <person name="Sato T."/>
            <person name="Scanlan E."/>
            <person name="Schleich S."/>
            <person name="Schroeter R."/>
            <person name="Scoffone F."/>
            <person name="Sekiguchi J."/>
            <person name="Sekowska A."/>
            <person name="Seror S.J."/>
            <person name="Serror P."/>
            <person name="Shin B.-S."/>
            <person name="Soldo B."/>
            <person name="Sorokin A."/>
            <person name="Tacconi E."/>
            <person name="Takagi T."/>
            <person name="Takahashi H."/>
            <person name="Takemaru K."/>
            <person name="Takeuchi M."/>
            <person name="Tamakoshi A."/>
            <person name="Tanaka T."/>
            <person name="Terpstra P."/>
            <person name="Tognoni A."/>
            <person name="Tosato V."/>
            <person name="Uchiyama S."/>
            <person name="Vandenbol M."/>
            <person name="Vannier F."/>
            <person name="Vassarotti A."/>
            <person name="Viari A."/>
            <person name="Wambutt R."/>
            <person name="Wedler E."/>
            <person name="Wedler H."/>
            <person name="Weitzenegger T."/>
            <person name="Winters P."/>
            <person name="Wipat A."/>
            <person name="Yamamoto H."/>
            <person name="Yamane K."/>
            <person name="Yasumoto K."/>
            <person name="Yata K."/>
            <person name="Yoshida K."/>
            <person name="Yoshikawa H.-F."/>
            <person name="Zumstein E."/>
            <person name="Yoshikawa H."/>
            <person name="Danchin A."/>
        </authorList>
    </citation>
    <scope>NUCLEOTIDE SEQUENCE [LARGE SCALE GENOMIC DNA]</scope>
    <source>
        <strain>168</strain>
    </source>
</reference>
<protein>
    <recommendedName>
        <fullName>SPbeta prophage-derived uncharacterized protein YotC</fullName>
    </recommendedName>
</protein>
<name>YOTC_BACSU</name>
<proteinExistence type="predicted"/>
<feature type="chain" id="PRO_0000359965" description="SPbeta prophage-derived uncharacterized protein YotC">
    <location>
        <begin position="1"/>
        <end position="63"/>
    </location>
</feature>
<gene>
    <name type="primary">yotC</name>
    <name type="synonym">yokC</name>
    <name type="ordered locus">BSU19930</name>
</gene>